<name>Y577_ACTPJ</name>
<organism>
    <name type="scientific">Actinobacillus pleuropneumoniae serotype 3 (strain JL03)</name>
    <dbReference type="NCBI Taxonomy" id="434271"/>
    <lineage>
        <taxon>Bacteria</taxon>
        <taxon>Pseudomonadati</taxon>
        <taxon>Pseudomonadota</taxon>
        <taxon>Gammaproteobacteria</taxon>
        <taxon>Pasteurellales</taxon>
        <taxon>Pasteurellaceae</taxon>
        <taxon>Actinobacillus</taxon>
    </lineage>
</organism>
<dbReference type="EMBL" id="CP000687">
    <property type="protein sequence ID" value="ABY69147.1"/>
    <property type="molecule type" value="Genomic_DNA"/>
</dbReference>
<dbReference type="RefSeq" id="WP_005607413.1">
    <property type="nucleotide sequence ID" value="NC_010278.1"/>
</dbReference>
<dbReference type="SMR" id="B0BUE2"/>
<dbReference type="KEGG" id="apj:APJL_0577"/>
<dbReference type="HOGENOM" id="CLU_175457_0_0_6"/>
<dbReference type="Proteomes" id="UP000008547">
    <property type="component" value="Chromosome"/>
</dbReference>
<dbReference type="Gene3D" id="1.10.3390.10">
    <property type="entry name" value="YejL-like"/>
    <property type="match status" value="1"/>
</dbReference>
<dbReference type="HAMAP" id="MF_00816">
    <property type="entry name" value="UPF0352"/>
    <property type="match status" value="1"/>
</dbReference>
<dbReference type="InterPro" id="IPR009857">
    <property type="entry name" value="UPF0352"/>
</dbReference>
<dbReference type="InterPro" id="IPR023202">
    <property type="entry name" value="YejL_sf"/>
</dbReference>
<dbReference type="NCBIfam" id="NF010242">
    <property type="entry name" value="PRK13689.1"/>
    <property type="match status" value="1"/>
</dbReference>
<dbReference type="Pfam" id="PF07208">
    <property type="entry name" value="DUF1414"/>
    <property type="match status" value="1"/>
</dbReference>
<dbReference type="PIRSF" id="PIRSF006188">
    <property type="entry name" value="UCP006188"/>
    <property type="match status" value="1"/>
</dbReference>
<dbReference type="SUPFAM" id="SSF158651">
    <property type="entry name" value="YejL-like"/>
    <property type="match status" value="1"/>
</dbReference>
<evidence type="ECO:0000255" key="1">
    <source>
        <dbReference type="HAMAP-Rule" id="MF_00816"/>
    </source>
</evidence>
<sequence>MATQSKYQSKQFDALSGDLIAILEKHKAPVDLSLMALGNMVTNILLENVQTEAQRLALAEAFSNALKNSLKIK</sequence>
<protein>
    <recommendedName>
        <fullName evidence="1">UPF0352 protein APJL_0577</fullName>
    </recommendedName>
</protein>
<accession>B0BUE2</accession>
<reference key="1">
    <citation type="journal article" date="2008" name="PLoS ONE">
        <title>Genome biology of Actinobacillus pleuropneumoniae JL03, an isolate of serotype 3 prevalent in China.</title>
        <authorList>
            <person name="Xu Z."/>
            <person name="Zhou Y."/>
            <person name="Li L."/>
            <person name="Zhou R."/>
            <person name="Xiao S."/>
            <person name="Wan Y."/>
            <person name="Zhang S."/>
            <person name="Wang K."/>
            <person name="Li W."/>
            <person name="Li L."/>
            <person name="Jin H."/>
            <person name="Kang M."/>
            <person name="Dalai B."/>
            <person name="Li T."/>
            <person name="Liu L."/>
            <person name="Cheng Y."/>
            <person name="Zhang L."/>
            <person name="Xu T."/>
            <person name="Zheng H."/>
            <person name="Pu S."/>
            <person name="Wang B."/>
            <person name="Gu W."/>
            <person name="Zhang X.L."/>
            <person name="Zhu G.-F."/>
            <person name="Wang S."/>
            <person name="Zhao G.-P."/>
            <person name="Chen H."/>
        </authorList>
    </citation>
    <scope>NUCLEOTIDE SEQUENCE [LARGE SCALE GENOMIC DNA]</scope>
    <source>
        <strain>JL03</strain>
    </source>
</reference>
<gene>
    <name type="ordered locus">APJL_0577</name>
</gene>
<proteinExistence type="inferred from homology"/>
<feature type="chain" id="PRO_1000199579" description="UPF0352 protein APJL_0577">
    <location>
        <begin position="1"/>
        <end position="73"/>
    </location>
</feature>
<comment type="similarity">
    <text evidence="1">Belongs to the UPF0352 family.</text>
</comment>